<evidence type="ECO:0000255" key="1">
    <source>
        <dbReference type="HAMAP-Rule" id="MF_00165"/>
    </source>
</evidence>
<name>KTHY_WOLSU</name>
<proteinExistence type="inferred from homology"/>
<organism>
    <name type="scientific">Wolinella succinogenes (strain ATCC 29543 / DSM 1740 / CCUG 13145 / JCM 31913 / LMG 7466 / NCTC 11488 / FDC 602W)</name>
    <name type="common">Vibrio succinogenes</name>
    <dbReference type="NCBI Taxonomy" id="273121"/>
    <lineage>
        <taxon>Bacteria</taxon>
        <taxon>Pseudomonadati</taxon>
        <taxon>Campylobacterota</taxon>
        <taxon>Epsilonproteobacteria</taxon>
        <taxon>Campylobacterales</taxon>
        <taxon>Helicobacteraceae</taxon>
        <taxon>Wolinella</taxon>
    </lineage>
</organism>
<keyword id="KW-0067">ATP-binding</keyword>
<keyword id="KW-0418">Kinase</keyword>
<keyword id="KW-0545">Nucleotide biosynthesis</keyword>
<keyword id="KW-0547">Nucleotide-binding</keyword>
<keyword id="KW-1185">Reference proteome</keyword>
<keyword id="KW-0808">Transferase</keyword>
<accession>Q7M9X1</accession>
<protein>
    <recommendedName>
        <fullName evidence="1">Thymidylate kinase</fullName>
        <ecNumber evidence="1">2.7.4.9</ecNumber>
    </recommendedName>
    <alternativeName>
        <fullName evidence="1">dTMP kinase</fullName>
    </alternativeName>
</protein>
<dbReference type="EC" id="2.7.4.9" evidence="1"/>
<dbReference type="EMBL" id="BX571658">
    <property type="protein sequence ID" value="CAE09744.1"/>
    <property type="molecule type" value="Genomic_DNA"/>
</dbReference>
<dbReference type="RefSeq" id="WP_011138544.1">
    <property type="nucleotide sequence ID" value="NC_005090.1"/>
</dbReference>
<dbReference type="SMR" id="Q7M9X1"/>
<dbReference type="STRING" id="273121.WS0613"/>
<dbReference type="KEGG" id="wsu:WS0613"/>
<dbReference type="eggNOG" id="COG0125">
    <property type="taxonomic scope" value="Bacteria"/>
</dbReference>
<dbReference type="HOGENOM" id="CLU_049131_0_0_7"/>
<dbReference type="Proteomes" id="UP000000422">
    <property type="component" value="Chromosome"/>
</dbReference>
<dbReference type="GO" id="GO:0005829">
    <property type="term" value="C:cytosol"/>
    <property type="evidence" value="ECO:0007669"/>
    <property type="project" value="TreeGrafter"/>
</dbReference>
<dbReference type="GO" id="GO:0005524">
    <property type="term" value="F:ATP binding"/>
    <property type="evidence" value="ECO:0007669"/>
    <property type="project" value="UniProtKB-UniRule"/>
</dbReference>
<dbReference type="GO" id="GO:0004798">
    <property type="term" value="F:dTMP kinase activity"/>
    <property type="evidence" value="ECO:0007669"/>
    <property type="project" value="UniProtKB-UniRule"/>
</dbReference>
<dbReference type="GO" id="GO:0006233">
    <property type="term" value="P:dTDP biosynthetic process"/>
    <property type="evidence" value="ECO:0007669"/>
    <property type="project" value="InterPro"/>
</dbReference>
<dbReference type="GO" id="GO:0006235">
    <property type="term" value="P:dTTP biosynthetic process"/>
    <property type="evidence" value="ECO:0007669"/>
    <property type="project" value="UniProtKB-UniRule"/>
</dbReference>
<dbReference type="GO" id="GO:0006227">
    <property type="term" value="P:dUDP biosynthetic process"/>
    <property type="evidence" value="ECO:0007669"/>
    <property type="project" value="TreeGrafter"/>
</dbReference>
<dbReference type="CDD" id="cd01672">
    <property type="entry name" value="TMPK"/>
    <property type="match status" value="1"/>
</dbReference>
<dbReference type="Gene3D" id="3.40.50.300">
    <property type="entry name" value="P-loop containing nucleotide triphosphate hydrolases"/>
    <property type="match status" value="1"/>
</dbReference>
<dbReference type="HAMAP" id="MF_00165">
    <property type="entry name" value="Thymidylate_kinase"/>
    <property type="match status" value="1"/>
</dbReference>
<dbReference type="InterPro" id="IPR027417">
    <property type="entry name" value="P-loop_NTPase"/>
</dbReference>
<dbReference type="InterPro" id="IPR039430">
    <property type="entry name" value="Thymidylate_kin-like_dom"/>
</dbReference>
<dbReference type="InterPro" id="IPR018094">
    <property type="entry name" value="Thymidylate_kinase"/>
</dbReference>
<dbReference type="NCBIfam" id="TIGR00041">
    <property type="entry name" value="DTMP_kinase"/>
    <property type="match status" value="1"/>
</dbReference>
<dbReference type="PANTHER" id="PTHR10344">
    <property type="entry name" value="THYMIDYLATE KINASE"/>
    <property type="match status" value="1"/>
</dbReference>
<dbReference type="PANTHER" id="PTHR10344:SF4">
    <property type="entry name" value="UMP-CMP KINASE 2, MITOCHONDRIAL"/>
    <property type="match status" value="1"/>
</dbReference>
<dbReference type="Pfam" id="PF02223">
    <property type="entry name" value="Thymidylate_kin"/>
    <property type="match status" value="1"/>
</dbReference>
<dbReference type="SUPFAM" id="SSF52540">
    <property type="entry name" value="P-loop containing nucleoside triphosphate hydrolases"/>
    <property type="match status" value="1"/>
</dbReference>
<comment type="function">
    <text evidence="1">Phosphorylation of dTMP to form dTDP in both de novo and salvage pathways of dTTP synthesis.</text>
</comment>
<comment type="catalytic activity">
    <reaction evidence="1">
        <text>dTMP + ATP = dTDP + ADP</text>
        <dbReference type="Rhea" id="RHEA:13517"/>
        <dbReference type="ChEBI" id="CHEBI:30616"/>
        <dbReference type="ChEBI" id="CHEBI:58369"/>
        <dbReference type="ChEBI" id="CHEBI:63528"/>
        <dbReference type="ChEBI" id="CHEBI:456216"/>
        <dbReference type="EC" id="2.7.4.9"/>
    </reaction>
</comment>
<comment type="similarity">
    <text evidence="1">Belongs to the thymidylate kinase family.</text>
</comment>
<reference key="1">
    <citation type="journal article" date="2003" name="Proc. Natl. Acad. Sci. U.S.A.">
        <title>Complete genome sequence and analysis of Wolinella succinogenes.</title>
        <authorList>
            <person name="Baar C."/>
            <person name="Eppinger M."/>
            <person name="Raddatz G."/>
            <person name="Simon J."/>
            <person name="Lanz C."/>
            <person name="Klimmek O."/>
            <person name="Nandakumar R."/>
            <person name="Gross R."/>
            <person name="Rosinus A."/>
            <person name="Keller H."/>
            <person name="Jagtap P."/>
            <person name="Linke B."/>
            <person name="Meyer F."/>
            <person name="Lederer H."/>
            <person name="Schuster S.C."/>
        </authorList>
    </citation>
    <scope>NUCLEOTIDE SEQUENCE [LARGE SCALE GENOMIC DNA]</scope>
    <source>
        <strain>ATCC 29543 / DSM 1740 / CCUG 13145 / JCM 31913 / LMG 7466 / NCTC 11488 / FDC 602W</strain>
    </source>
</reference>
<feature type="chain" id="PRO_1000123600" description="Thymidylate kinase">
    <location>
        <begin position="1"/>
        <end position="190"/>
    </location>
</feature>
<feature type="binding site" evidence="1">
    <location>
        <begin position="7"/>
        <end position="14"/>
    </location>
    <ligand>
        <name>ATP</name>
        <dbReference type="ChEBI" id="CHEBI:30616"/>
    </ligand>
</feature>
<gene>
    <name evidence="1" type="primary">tmk</name>
    <name type="ordered locus">WS0613</name>
</gene>
<sequence length="190" mass="20871">MYVAIEGVDTCGKSTQIALLKRRFPGAIFTKEPGGTALGMKLRELLLGGEAKSAKAELLLFLADRAEHMELVIKPALDKLLFSDRSLISGMAYAKGWDELWLKSLNLFATEGIVPDKVVILELTAKELSYRLSQKSHDSIESRGVEYLLELQERIKQMTALLGIPSLTLSASLSPEEIHGRIVSGFVLKG</sequence>